<accession>A7GK15</accession>
<keyword id="KW-0488">Methylation</keyword>
<keyword id="KW-0687">Ribonucleoprotein</keyword>
<keyword id="KW-0689">Ribosomal protein</keyword>
<keyword id="KW-0694">RNA-binding</keyword>
<keyword id="KW-0699">rRNA-binding</keyword>
<keyword id="KW-0820">tRNA-binding</keyword>
<evidence type="ECO:0000250" key="1"/>
<evidence type="ECO:0000255" key="2">
    <source>
        <dbReference type="HAMAP-Rule" id="MF_00403"/>
    </source>
</evidence>
<evidence type="ECO:0000305" key="3"/>
<protein>
    <recommendedName>
        <fullName evidence="2">Small ribosomal subunit protein uS12</fullName>
    </recommendedName>
    <alternativeName>
        <fullName evidence="3">30S ribosomal protein S12</fullName>
    </alternativeName>
</protein>
<comment type="function">
    <text evidence="2">With S4 and S5 plays an important role in translational accuracy.</text>
</comment>
<comment type="function">
    <text evidence="2">Interacts with and stabilizes bases of the 16S rRNA that are involved in tRNA selection in the A site and with the mRNA backbone. Located at the interface of the 30S and 50S subunits, it traverses the body of the 30S subunit contacting proteins on the other side and probably holding the rRNA structure together. The combined cluster of proteins S8, S12 and S17 appears to hold together the shoulder and platform of the 30S subunit.</text>
</comment>
<comment type="subunit">
    <text evidence="2">Part of the 30S ribosomal subunit. Contacts proteins S8 and S17. May interact with IF1 in the 30S initiation complex.</text>
</comment>
<comment type="similarity">
    <text evidence="2">Belongs to the universal ribosomal protein uS12 family.</text>
</comment>
<organism>
    <name type="scientific">Bacillus cytotoxicus (strain DSM 22905 / CIP 110041 / 391-98 / NVH 391-98)</name>
    <dbReference type="NCBI Taxonomy" id="315749"/>
    <lineage>
        <taxon>Bacteria</taxon>
        <taxon>Bacillati</taxon>
        <taxon>Bacillota</taxon>
        <taxon>Bacilli</taxon>
        <taxon>Bacillales</taxon>
        <taxon>Bacillaceae</taxon>
        <taxon>Bacillus</taxon>
        <taxon>Bacillus cereus group</taxon>
    </lineage>
</organism>
<reference key="1">
    <citation type="journal article" date="2008" name="Chem. Biol. Interact.">
        <title>Extending the Bacillus cereus group genomics to putative food-borne pathogens of different toxicity.</title>
        <authorList>
            <person name="Lapidus A."/>
            <person name="Goltsman E."/>
            <person name="Auger S."/>
            <person name="Galleron N."/>
            <person name="Segurens B."/>
            <person name="Dossat C."/>
            <person name="Land M.L."/>
            <person name="Broussolle V."/>
            <person name="Brillard J."/>
            <person name="Guinebretiere M.-H."/>
            <person name="Sanchis V."/>
            <person name="Nguen-the C."/>
            <person name="Lereclus D."/>
            <person name="Richardson P."/>
            <person name="Wincker P."/>
            <person name="Weissenbach J."/>
            <person name="Ehrlich S.D."/>
            <person name="Sorokin A."/>
        </authorList>
    </citation>
    <scope>NUCLEOTIDE SEQUENCE [LARGE SCALE GENOMIC DNA]</scope>
    <source>
        <strain>DSM 22905 / CIP 110041 / 391-98 / NVH 391-98</strain>
    </source>
</reference>
<dbReference type="EMBL" id="CP000764">
    <property type="protein sequence ID" value="ABS20473.1"/>
    <property type="molecule type" value="Genomic_DNA"/>
</dbReference>
<dbReference type="RefSeq" id="WP_011983241.1">
    <property type="nucleotide sequence ID" value="NC_009674.1"/>
</dbReference>
<dbReference type="SMR" id="A7GK15"/>
<dbReference type="STRING" id="315749.Bcer98_0099"/>
<dbReference type="GeneID" id="33895420"/>
<dbReference type="KEGG" id="bcy:Bcer98_0099"/>
<dbReference type="eggNOG" id="COG0048">
    <property type="taxonomic scope" value="Bacteria"/>
</dbReference>
<dbReference type="HOGENOM" id="CLU_104295_1_2_9"/>
<dbReference type="OrthoDB" id="9802366at2"/>
<dbReference type="Proteomes" id="UP000002300">
    <property type="component" value="Chromosome"/>
</dbReference>
<dbReference type="GO" id="GO:0015935">
    <property type="term" value="C:small ribosomal subunit"/>
    <property type="evidence" value="ECO:0007669"/>
    <property type="project" value="InterPro"/>
</dbReference>
<dbReference type="GO" id="GO:0019843">
    <property type="term" value="F:rRNA binding"/>
    <property type="evidence" value="ECO:0007669"/>
    <property type="project" value="UniProtKB-UniRule"/>
</dbReference>
<dbReference type="GO" id="GO:0003735">
    <property type="term" value="F:structural constituent of ribosome"/>
    <property type="evidence" value="ECO:0007669"/>
    <property type="project" value="InterPro"/>
</dbReference>
<dbReference type="GO" id="GO:0000049">
    <property type="term" value="F:tRNA binding"/>
    <property type="evidence" value="ECO:0007669"/>
    <property type="project" value="UniProtKB-UniRule"/>
</dbReference>
<dbReference type="GO" id="GO:0006412">
    <property type="term" value="P:translation"/>
    <property type="evidence" value="ECO:0007669"/>
    <property type="project" value="UniProtKB-UniRule"/>
</dbReference>
<dbReference type="CDD" id="cd03368">
    <property type="entry name" value="Ribosomal_S12"/>
    <property type="match status" value="1"/>
</dbReference>
<dbReference type="FunFam" id="2.40.50.140:FF:000001">
    <property type="entry name" value="30S ribosomal protein S12"/>
    <property type="match status" value="1"/>
</dbReference>
<dbReference type="Gene3D" id="2.40.50.140">
    <property type="entry name" value="Nucleic acid-binding proteins"/>
    <property type="match status" value="1"/>
</dbReference>
<dbReference type="HAMAP" id="MF_00403_B">
    <property type="entry name" value="Ribosomal_uS12_B"/>
    <property type="match status" value="1"/>
</dbReference>
<dbReference type="InterPro" id="IPR012340">
    <property type="entry name" value="NA-bd_OB-fold"/>
</dbReference>
<dbReference type="InterPro" id="IPR006032">
    <property type="entry name" value="Ribosomal_uS12"/>
</dbReference>
<dbReference type="InterPro" id="IPR005679">
    <property type="entry name" value="Ribosomal_uS12_bac"/>
</dbReference>
<dbReference type="NCBIfam" id="TIGR00981">
    <property type="entry name" value="rpsL_bact"/>
    <property type="match status" value="1"/>
</dbReference>
<dbReference type="PANTHER" id="PTHR11652">
    <property type="entry name" value="30S RIBOSOMAL PROTEIN S12 FAMILY MEMBER"/>
    <property type="match status" value="1"/>
</dbReference>
<dbReference type="Pfam" id="PF00164">
    <property type="entry name" value="Ribosom_S12_S23"/>
    <property type="match status" value="1"/>
</dbReference>
<dbReference type="PRINTS" id="PR01034">
    <property type="entry name" value="RIBOSOMALS12"/>
</dbReference>
<dbReference type="SUPFAM" id="SSF50249">
    <property type="entry name" value="Nucleic acid-binding proteins"/>
    <property type="match status" value="1"/>
</dbReference>
<dbReference type="PROSITE" id="PS00055">
    <property type="entry name" value="RIBOSOMAL_S12"/>
    <property type="match status" value="1"/>
</dbReference>
<gene>
    <name evidence="2" type="primary">rpsL</name>
    <name type="ordered locus">Bcer98_0099</name>
</gene>
<name>RS12_BACCN</name>
<proteinExistence type="inferred from homology"/>
<sequence length="140" mass="15460">MPTINQLVRKGRTDKVWKSKSPALNKGFNSLKKKSTDISAPQKRGVCTRVGTMTPKKPNSALRKYARVRLTNGIEVTAYIPGIGHNLQEHSVVLIRGGRVKDLPGVRYHIVRGALDTAGVDKRMQGRSKYGTKKPKAAKK</sequence>
<feature type="chain" id="PRO_1000080381" description="Small ribosomal subunit protein uS12">
    <location>
        <begin position="1"/>
        <end position="140"/>
    </location>
</feature>
<feature type="modified residue" description="3-methylthioaspartic acid" evidence="1">
    <location>
        <position position="102"/>
    </location>
</feature>